<protein>
    <recommendedName>
        <fullName>tRNA wybutosine-synthesizing protein 4</fullName>
        <shortName>tRNA yW-synthesizing protein 4</shortName>
        <ecNumber>2.1.1.290</ecNumber>
        <ecNumber>2.3.1.231</ecNumber>
    </recommendedName>
    <alternativeName>
        <fullName>Leucine carboxyl methyltransferase 2</fullName>
    </alternativeName>
    <alternativeName>
        <fullName>tRNA(Phe) (7-(3-amino-3-(methoxycarbonyl)propyl)wyosine(37)-N)-methoxycarbonyltransferase</fullName>
    </alternativeName>
    <alternativeName>
        <fullName>tRNA(Phe) (7-(3-amino-3-carboxypropyl)wyosine(37)-O)-methyltransferase</fullName>
    </alternativeName>
</protein>
<reference key="1">
    <citation type="journal article" date="2004" name="Genome Res.">
        <title>The status, quality, and expansion of the NIH full-length cDNA project: the Mammalian Gene Collection (MGC).</title>
        <authorList>
            <consortium name="The MGC Project Team"/>
        </authorList>
    </citation>
    <scope>NUCLEOTIDE SEQUENCE [LARGE SCALE MRNA]</scope>
    <source>
        <tissue>Lung</tissue>
    </source>
</reference>
<organism>
    <name type="scientific">Rattus norvegicus</name>
    <name type="common">Rat</name>
    <dbReference type="NCBI Taxonomy" id="10116"/>
    <lineage>
        <taxon>Eukaryota</taxon>
        <taxon>Metazoa</taxon>
        <taxon>Chordata</taxon>
        <taxon>Craniata</taxon>
        <taxon>Vertebrata</taxon>
        <taxon>Euteleostomi</taxon>
        <taxon>Mammalia</taxon>
        <taxon>Eutheria</taxon>
        <taxon>Euarchontoglires</taxon>
        <taxon>Glires</taxon>
        <taxon>Rodentia</taxon>
        <taxon>Myomorpha</taxon>
        <taxon>Muroidea</taxon>
        <taxon>Muridae</taxon>
        <taxon>Murinae</taxon>
        <taxon>Rattus</taxon>
    </lineage>
</organism>
<dbReference type="EC" id="2.1.1.290"/>
<dbReference type="EC" id="2.3.1.231"/>
<dbReference type="EMBL" id="BC083783">
    <property type="protein sequence ID" value="AAH83783.1"/>
    <property type="molecule type" value="mRNA"/>
</dbReference>
<dbReference type="RefSeq" id="NP_001011956.1">
    <property type="nucleotide sequence ID" value="NM_001011956.1"/>
</dbReference>
<dbReference type="SMR" id="Q5XIA3"/>
<dbReference type="FunCoup" id="Q5XIA3">
    <property type="interactions" value="550"/>
</dbReference>
<dbReference type="STRING" id="10116.ENSRNOP00000060993"/>
<dbReference type="PhosphoSitePlus" id="Q5XIA3"/>
<dbReference type="jPOST" id="Q5XIA3"/>
<dbReference type="PaxDb" id="10116-ENSRNOP00000060993"/>
<dbReference type="Ensembl" id="ENSRNOT00000068132.3">
    <property type="protein sequence ID" value="ENSRNOP00000060993.1"/>
    <property type="gene ID" value="ENSRNOG00000043002.3"/>
</dbReference>
<dbReference type="GeneID" id="296098"/>
<dbReference type="KEGG" id="rno:296098"/>
<dbReference type="UCSC" id="RGD:1305829">
    <property type="organism name" value="rat"/>
</dbReference>
<dbReference type="AGR" id="RGD:1305829"/>
<dbReference type="CTD" id="9836"/>
<dbReference type="RGD" id="1305829">
    <property type="gene designation" value="Lcmt2"/>
</dbReference>
<dbReference type="eggNOG" id="KOG2918">
    <property type="taxonomic scope" value="Eukaryota"/>
</dbReference>
<dbReference type="GeneTree" id="ENSGT00940000162599"/>
<dbReference type="HOGENOM" id="CLU_002761_2_0_1"/>
<dbReference type="InParanoid" id="Q5XIA3"/>
<dbReference type="OMA" id="FCILEQF"/>
<dbReference type="OrthoDB" id="199913at2759"/>
<dbReference type="PhylomeDB" id="Q5XIA3"/>
<dbReference type="TreeFam" id="TF315087"/>
<dbReference type="UniPathway" id="UPA00375"/>
<dbReference type="PRO" id="PR:Q5XIA3"/>
<dbReference type="Proteomes" id="UP000002494">
    <property type="component" value="Chromosome 3"/>
</dbReference>
<dbReference type="Bgee" id="ENSRNOG00000043002">
    <property type="expression patterns" value="Expressed in thymus and 19 other cell types or tissues"/>
</dbReference>
<dbReference type="GO" id="GO:0008175">
    <property type="term" value="F:tRNA methyltransferase activity"/>
    <property type="evidence" value="ECO:0000318"/>
    <property type="project" value="GO_Central"/>
</dbReference>
<dbReference type="GO" id="GO:0030488">
    <property type="term" value="P:tRNA methylation"/>
    <property type="evidence" value="ECO:0000318"/>
    <property type="project" value="GO_Central"/>
</dbReference>
<dbReference type="GO" id="GO:0031591">
    <property type="term" value="P:wybutosine biosynthetic process"/>
    <property type="evidence" value="ECO:0000318"/>
    <property type="project" value="GO_Central"/>
</dbReference>
<dbReference type="FunFam" id="2.120.10.80:FF:000084">
    <property type="entry name" value="Leucine carboxyl methyltransferase 2"/>
    <property type="match status" value="1"/>
</dbReference>
<dbReference type="FunFam" id="3.40.50.150:FF:000207">
    <property type="entry name" value="Leucine carboxyl methyltransferase 2"/>
    <property type="match status" value="1"/>
</dbReference>
<dbReference type="Gene3D" id="2.120.10.80">
    <property type="entry name" value="Kelch-type beta propeller"/>
    <property type="match status" value="2"/>
</dbReference>
<dbReference type="Gene3D" id="3.40.50.150">
    <property type="entry name" value="Vaccinia Virus protein VP39"/>
    <property type="match status" value="1"/>
</dbReference>
<dbReference type="InterPro" id="IPR011043">
    <property type="entry name" value="Gal_Oxase/kelch_b-propeller"/>
</dbReference>
<dbReference type="InterPro" id="IPR015915">
    <property type="entry name" value="Kelch-typ_b-propeller"/>
</dbReference>
<dbReference type="InterPro" id="IPR007213">
    <property type="entry name" value="Ppm1/Ppm2/Tcmp"/>
</dbReference>
<dbReference type="InterPro" id="IPR029063">
    <property type="entry name" value="SAM-dependent_MTases_sf"/>
</dbReference>
<dbReference type="PANTHER" id="PTHR46529">
    <property type="entry name" value="TRNA WYBUTOSINE-SYNTHESIZING PROTEIN 4"/>
    <property type="match status" value="1"/>
</dbReference>
<dbReference type="PANTHER" id="PTHR46529:SF1">
    <property type="entry name" value="TRNA WYBUTOSINE-SYNTHESIZING PROTEIN 4"/>
    <property type="match status" value="1"/>
</dbReference>
<dbReference type="Pfam" id="PF24681">
    <property type="entry name" value="Kelch_KLHDC2_KLHL20_DRC7"/>
    <property type="match status" value="1"/>
</dbReference>
<dbReference type="Pfam" id="PF04072">
    <property type="entry name" value="LCM"/>
    <property type="match status" value="1"/>
</dbReference>
<dbReference type="SUPFAM" id="SSF50965">
    <property type="entry name" value="Galactose oxidase, central domain"/>
    <property type="match status" value="1"/>
</dbReference>
<dbReference type="SUPFAM" id="SSF117281">
    <property type="entry name" value="Kelch motif"/>
    <property type="match status" value="1"/>
</dbReference>
<dbReference type="SUPFAM" id="SSF53335">
    <property type="entry name" value="S-adenosyl-L-methionine-dependent methyltransferases"/>
    <property type="match status" value="1"/>
</dbReference>
<proteinExistence type="evidence at transcript level"/>
<gene>
    <name type="primary">Lcmt2</name>
    <name type="synonym">Tyw4</name>
</gene>
<comment type="function">
    <text evidence="1">Probable S-adenosyl-L-methionine-dependent methyltransferase that acts as a component of the wybutosine biosynthesis pathway. Wybutosine is a hyper modified guanosine with a tricyclic base found at the 3'-position adjacent to the anticodon of eukaryotic phenylalanine tRNA (By similarity). May methylate the carboxyl group of leucine residues to form alpha-leucine ester residues.</text>
</comment>
<comment type="catalytic activity">
    <reaction>
        <text>7-[(3S)-3-amino-3-carboxypropyl]wyosine(37) in tRNA(Phe) + S-adenosyl-L-methionine = 7-[(3S)-(3-amino-3-methoxycarbonyl)propyl]wyosine(37) in tRNA(Phe) + S-adenosyl-L-homocysteine</text>
        <dbReference type="Rhea" id="RHEA:36903"/>
        <dbReference type="Rhea" id="RHEA-COMP:10379"/>
        <dbReference type="Rhea" id="RHEA-COMP:11844"/>
        <dbReference type="ChEBI" id="CHEBI:57856"/>
        <dbReference type="ChEBI" id="CHEBI:59789"/>
        <dbReference type="ChEBI" id="CHEBI:73543"/>
        <dbReference type="ChEBI" id="CHEBI:74275"/>
        <dbReference type="EC" id="2.1.1.290"/>
    </reaction>
</comment>
<comment type="catalytic activity">
    <reaction>
        <text>7-[(3S)-(3-amino-3-methoxycarbonyl)propyl]wyosine(37) in tRNA(Phe) + S-adenosyl-L-methionine + CO2 = wybutosine(37) in tRNA(Phe) + S-adenosyl-L-homocysteine + 2 H(+)</text>
        <dbReference type="Rhea" id="RHEA:37119"/>
        <dbReference type="Rhea" id="RHEA-COMP:11844"/>
        <dbReference type="Rhea" id="RHEA-COMP:11847"/>
        <dbReference type="ChEBI" id="CHEBI:15378"/>
        <dbReference type="ChEBI" id="CHEBI:16526"/>
        <dbReference type="ChEBI" id="CHEBI:57856"/>
        <dbReference type="ChEBI" id="CHEBI:59789"/>
        <dbReference type="ChEBI" id="CHEBI:73544"/>
        <dbReference type="ChEBI" id="CHEBI:74275"/>
        <dbReference type="EC" id="2.3.1.231"/>
    </reaction>
</comment>
<comment type="pathway">
    <text>tRNA modification; wybutosine-tRNA(Phe) biosynthesis.</text>
</comment>
<comment type="subunit">
    <text evidence="1">Interacts with RNF144B/IBRDC2.</text>
</comment>
<comment type="similarity">
    <text evidence="3">Belongs to the methyltransferase superfamily. LCMT family.</text>
</comment>
<keyword id="KW-0489">Methyltransferase</keyword>
<keyword id="KW-1185">Reference proteome</keyword>
<keyword id="KW-0949">S-adenosyl-L-methionine</keyword>
<keyword id="KW-0808">Transferase</keyword>
<keyword id="KW-0819">tRNA processing</keyword>
<accession>Q5XIA3</accession>
<evidence type="ECO:0000250" key="1"/>
<evidence type="ECO:0000256" key="2">
    <source>
        <dbReference type="SAM" id="MobiDB-lite"/>
    </source>
</evidence>
<evidence type="ECO:0000305" key="3"/>
<sequence>MGPRSRQRRTGTVQSTNDSSSLSKRSLAAQGYVSDAFAPLLVPGIVRRTPLIHRGYYVRARAVRHCVRAFLDLTGAIRSPTRAQILSLGSGSDSLYFRLKAAGLLTRTAVWEVDFPDVSRLKAKRIEETPELCAQTGPFKIGDSASTLCFESSDYRILGADLRELQRLGEALDSAGLDATSPTLILAEAVLTYLEPSRAAALIAWVAQRFPNALFVIYEQMKPGDAFGQIMLQHFRRLNSPLHGLELFPDVEAQRQRFLQAGWTTCSALDLNEFYRRLIPADERRRVETLEPFDEFEEWHLKCSHYFILAASRGDILSETPVFLPSEASFQIDPALPSGFLSASVVTSDHQHSSLQRYGHTSVLLSPGIIFSAGGFGEQEGRHCRVSRFHLLSRSCDSEWKGCQISTLGTEGQWDGRLYHTMTRLSDTRVLVLGGRLSPVNPASGALQLDIYKSEDNCPEGQNVVVTKAALEEGSMLSCWRHSTTEVYYQNQRYLFVYGGRSVTDPVLSDCRFLHVETMAWVRIPVQGSSPEGRHSHSACSWQGGALIAGGLGASEEPLSSVFFLRPVSSGFLWESIHIQPSITPRYSHTAHVFNGKLLLVGGVWIHSSSVPGVTVISLTTGLSSEYQIDTASVPWPLMLHNHSSALLPEEQQLLLIGGGGNCFSFGTYFNPHTVGLDLSSLGLGQ</sequence>
<name>TYW4_RAT</name>
<feature type="chain" id="PRO_0000204425" description="tRNA wybutosine-synthesizing protein 4">
    <location>
        <begin position="1"/>
        <end position="686"/>
    </location>
</feature>
<feature type="region of interest" description="Disordered" evidence="2">
    <location>
        <begin position="1"/>
        <end position="22"/>
    </location>
</feature>
<feature type="compositionally biased region" description="Polar residues" evidence="2">
    <location>
        <begin position="10"/>
        <end position="22"/>
    </location>
</feature>
<feature type="binding site" evidence="1">
    <location>
        <position position="59"/>
    </location>
    <ligand>
        <name>S-adenosyl-L-methionine</name>
        <dbReference type="ChEBI" id="CHEBI:59789"/>
    </ligand>
</feature>
<feature type="binding site" evidence="1">
    <location>
        <position position="89"/>
    </location>
    <ligand>
        <name>S-adenosyl-L-methionine</name>
        <dbReference type="ChEBI" id="CHEBI:59789"/>
    </ligand>
</feature>
<feature type="binding site" evidence="1">
    <location>
        <position position="114"/>
    </location>
    <ligand>
        <name>S-adenosyl-L-methionine</name>
        <dbReference type="ChEBI" id="CHEBI:59789"/>
    </ligand>
</feature>
<feature type="binding site" evidence="1">
    <location>
        <begin position="161"/>
        <end position="162"/>
    </location>
    <ligand>
        <name>S-adenosyl-L-methionine</name>
        <dbReference type="ChEBI" id="CHEBI:59789"/>
    </ligand>
</feature>
<feature type="binding site" evidence="1">
    <location>
        <position position="188"/>
    </location>
    <ligand>
        <name>S-adenosyl-L-methionine</name>
        <dbReference type="ChEBI" id="CHEBI:59789"/>
    </ligand>
</feature>